<organism>
    <name type="scientific">Sodalis glossinidius (strain morsitans)</name>
    <dbReference type="NCBI Taxonomy" id="343509"/>
    <lineage>
        <taxon>Bacteria</taxon>
        <taxon>Pseudomonadati</taxon>
        <taxon>Pseudomonadota</taxon>
        <taxon>Gammaproteobacteria</taxon>
        <taxon>Enterobacterales</taxon>
        <taxon>Bruguierivoracaceae</taxon>
        <taxon>Sodalis</taxon>
    </lineage>
</organism>
<gene>
    <name evidence="1" type="primary">leuD</name>
    <name type="ordered locus">SG0434</name>
</gene>
<accession>Q2NVW6</accession>
<feature type="chain" id="PRO_1000063844" description="3-isopropylmalate dehydratase small subunit">
    <location>
        <begin position="1"/>
        <end position="200"/>
    </location>
</feature>
<name>LEUD_SODGM</name>
<comment type="function">
    <text evidence="1">Catalyzes the isomerization between 2-isopropylmalate and 3-isopropylmalate, via the formation of 2-isopropylmaleate.</text>
</comment>
<comment type="catalytic activity">
    <reaction evidence="1">
        <text>(2R,3S)-3-isopropylmalate = (2S)-2-isopropylmalate</text>
        <dbReference type="Rhea" id="RHEA:32287"/>
        <dbReference type="ChEBI" id="CHEBI:1178"/>
        <dbReference type="ChEBI" id="CHEBI:35121"/>
        <dbReference type="EC" id="4.2.1.33"/>
    </reaction>
</comment>
<comment type="pathway">
    <text evidence="1">Amino-acid biosynthesis; L-leucine biosynthesis; L-leucine from 3-methyl-2-oxobutanoate: step 2/4.</text>
</comment>
<comment type="subunit">
    <text evidence="1">Heterodimer of LeuC and LeuD.</text>
</comment>
<comment type="similarity">
    <text evidence="1">Belongs to the LeuD family. LeuD type 1 subfamily.</text>
</comment>
<proteinExistence type="inferred from homology"/>
<reference key="1">
    <citation type="journal article" date="2006" name="Genome Res.">
        <title>Massive genome erosion and functional adaptations provide insights into the symbiotic lifestyle of Sodalis glossinidius in the tsetse host.</title>
        <authorList>
            <person name="Toh H."/>
            <person name="Weiss B.L."/>
            <person name="Perkin S.A.H."/>
            <person name="Yamashita A."/>
            <person name="Oshima K."/>
            <person name="Hattori M."/>
            <person name="Aksoy S."/>
        </authorList>
    </citation>
    <scope>NUCLEOTIDE SEQUENCE [LARGE SCALE GENOMIC DNA]</scope>
    <source>
        <strain>morsitans</strain>
    </source>
</reference>
<evidence type="ECO:0000255" key="1">
    <source>
        <dbReference type="HAMAP-Rule" id="MF_01031"/>
    </source>
</evidence>
<sequence>MAKFTQHTGIVVPLDAANVDTDAIIPKQFLQKVTRTGFGQHLFNDWRFLDNAGQQPNPDFVLNQPRYRGASILLARENFGCGSSREHAPWALTDYGFHAVIAPSFADIFYGNSFNNQLLPITLSEEQINELFAMVAAQEGMTFTVDLERQQVVAGDKVYPFEIDSFRRHYMINGLDSIGLTLMHDEAISQYESRQPAFLN</sequence>
<keyword id="KW-0028">Amino-acid biosynthesis</keyword>
<keyword id="KW-0100">Branched-chain amino acid biosynthesis</keyword>
<keyword id="KW-0432">Leucine biosynthesis</keyword>
<keyword id="KW-0456">Lyase</keyword>
<protein>
    <recommendedName>
        <fullName evidence="1">3-isopropylmalate dehydratase small subunit</fullName>
        <ecNumber evidence="1">4.2.1.33</ecNumber>
    </recommendedName>
    <alternativeName>
        <fullName evidence="1">Alpha-IPM isomerase</fullName>
        <shortName evidence="1">IPMI</shortName>
    </alternativeName>
    <alternativeName>
        <fullName evidence="1">Isopropylmalate isomerase</fullName>
    </alternativeName>
</protein>
<dbReference type="EC" id="4.2.1.33" evidence="1"/>
<dbReference type="EMBL" id="AP008232">
    <property type="protein sequence ID" value="BAE73709.1"/>
    <property type="molecule type" value="Genomic_DNA"/>
</dbReference>
<dbReference type="RefSeq" id="WP_011410297.1">
    <property type="nucleotide sequence ID" value="NC_007712.1"/>
</dbReference>
<dbReference type="SMR" id="Q2NVW6"/>
<dbReference type="STRING" id="343509.SG0434"/>
<dbReference type="KEGG" id="sgl:SG0434"/>
<dbReference type="eggNOG" id="COG0066">
    <property type="taxonomic scope" value="Bacteria"/>
</dbReference>
<dbReference type="HOGENOM" id="CLU_081378_0_3_6"/>
<dbReference type="OrthoDB" id="9777465at2"/>
<dbReference type="BioCyc" id="SGLO343509:SGP1_RS03935-MONOMER"/>
<dbReference type="UniPathway" id="UPA00048">
    <property type="reaction ID" value="UER00071"/>
</dbReference>
<dbReference type="Proteomes" id="UP000001932">
    <property type="component" value="Chromosome"/>
</dbReference>
<dbReference type="GO" id="GO:0009316">
    <property type="term" value="C:3-isopropylmalate dehydratase complex"/>
    <property type="evidence" value="ECO:0007669"/>
    <property type="project" value="InterPro"/>
</dbReference>
<dbReference type="GO" id="GO:0003861">
    <property type="term" value="F:3-isopropylmalate dehydratase activity"/>
    <property type="evidence" value="ECO:0007669"/>
    <property type="project" value="UniProtKB-UniRule"/>
</dbReference>
<dbReference type="GO" id="GO:0009098">
    <property type="term" value="P:L-leucine biosynthetic process"/>
    <property type="evidence" value="ECO:0007669"/>
    <property type="project" value="UniProtKB-UniRule"/>
</dbReference>
<dbReference type="CDD" id="cd01577">
    <property type="entry name" value="IPMI_Swivel"/>
    <property type="match status" value="1"/>
</dbReference>
<dbReference type="FunFam" id="3.20.19.10:FF:000003">
    <property type="entry name" value="3-isopropylmalate dehydratase small subunit"/>
    <property type="match status" value="1"/>
</dbReference>
<dbReference type="Gene3D" id="3.20.19.10">
    <property type="entry name" value="Aconitase, domain 4"/>
    <property type="match status" value="1"/>
</dbReference>
<dbReference type="HAMAP" id="MF_01031">
    <property type="entry name" value="LeuD_type1"/>
    <property type="match status" value="1"/>
</dbReference>
<dbReference type="InterPro" id="IPR004431">
    <property type="entry name" value="3-IsopropMal_deHydase_ssu"/>
</dbReference>
<dbReference type="InterPro" id="IPR015928">
    <property type="entry name" value="Aconitase/3IPM_dehydase_swvl"/>
</dbReference>
<dbReference type="InterPro" id="IPR000573">
    <property type="entry name" value="AconitaseA/IPMdHydase_ssu_swvl"/>
</dbReference>
<dbReference type="InterPro" id="IPR033940">
    <property type="entry name" value="IPMI_Swivel"/>
</dbReference>
<dbReference type="InterPro" id="IPR050075">
    <property type="entry name" value="LeuD"/>
</dbReference>
<dbReference type="NCBIfam" id="TIGR00171">
    <property type="entry name" value="leuD"/>
    <property type="match status" value="1"/>
</dbReference>
<dbReference type="NCBIfam" id="NF002458">
    <property type="entry name" value="PRK01641.1"/>
    <property type="match status" value="1"/>
</dbReference>
<dbReference type="PANTHER" id="PTHR43345:SF5">
    <property type="entry name" value="3-ISOPROPYLMALATE DEHYDRATASE SMALL SUBUNIT"/>
    <property type="match status" value="1"/>
</dbReference>
<dbReference type="PANTHER" id="PTHR43345">
    <property type="entry name" value="3-ISOPROPYLMALATE DEHYDRATASE SMALL SUBUNIT 2-RELATED-RELATED"/>
    <property type="match status" value="1"/>
</dbReference>
<dbReference type="Pfam" id="PF00694">
    <property type="entry name" value="Aconitase_C"/>
    <property type="match status" value="1"/>
</dbReference>
<dbReference type="SUPFAM" id="SSF52016">
    <property type="entry name" value="LeuD/IlvD-like"/>
    <property type="match status" value="1"/>
</dbReference>